<evidence type="ECO:0000255" key="1">
    <source>
        <dbReference type="HAMAP-Rule" id="MF_00446"/>
    </source>
</evidence>
<gene>
    <name evidence="1" type="primary">panD</name>
    <name type="ordered locus">YPN_0686</name>
    <name type="ORF">YP516_0730</name>
</gene>
<name>PAND_YERPN</name>
<accession>Q1CLW2</accession>
<accession>C4GQ52</accession>
<protein>
    <recommendedName>
        <fullName evidence="1">Aspartate 1-decarboxylase</fullName>
        <ecNumber evidence="1">4.1.1.11</ecNumber>
    </recommendedName>
    <alternativeName>
        <fullName evidence="1">Aspartate alpha-decarboxylase</fullName>
    </alternativeName>
    <component>
        <recommendedName>
            <fullName evidence="1">Aspartate 1-decarboxylase beta chain</fullName>
        </recommendedName>
    </component>
    <component>
        <recommendedName>
            <fullName evidence="1">Aspartate 1-decarboxylase alpha chain</fullName>
        </recommendedName>
    </component>
</protein>
<sequence length="126" mass="13906">MIRTMLQGKLHRVKVTQADLHYEGSCAIDQDFLEAAGILEYEAIDIYNVDNGQRFSTYAIAAERGSRIISVNGAAARCACVGDKLIICSYVQMSYAAARLHHPKVAYFEGENQLQRKAKAVPVQVA</sequence>
<proteinExistence type="inferred from homology"/>
<reference key="1">
    <citation type="journal article" date="2006" name="J. Bacteriol.">
        <title>Complete genome sequence of Yersinia pestis strains Antiqua and Nepal516: evidence of gene reduction in an emerging pathogen.</title>
        <authorList>
            <person name="Chain P.S.G."/>
            <person name="Hu P."/>
            <person name="Malfatti S.A."/>
            <person name="Radnedge L."/>
            <person name="Larimer F."/>
            <person name="Vergez L.M."/>
            <person name="Worsham P."/>
            <person name="Chu M.C."/>
            <person name="Andersen G.L."/>
        </authorList>
    </citation>
    <scope>NUCLEOTIDE SEQUENCE [LARGE SCALE GENOMIC DNA]</scope>
    <source>
        <strain>Nepal516</strain>
    </source>
</reference>
<reference key="2">
    <citation type="submission" date="2009-04" db="EMBL/GenBank/DDBJ databases">
        <title>Yersinia pestis Nepal516A whole genome shotgun sequencing project.</title>
        <authorList>
            <person name="Plunkett G. III"/>
            <person name="Anderson B.D."/>
            <person name="Baumler D.J."/>
            <person name="Burland V."/>
            <person name="Cabot E.L."/>
            <person name="Glasner J.D."/>
            <person name="Mau B."/>
            <person name="Neeno-Eckwall E."/>
            <person name="Perna N.T."/>
            <person name="Munk A.C."/>
            <person name="Tapia R."/>
            <person name="Green L.D."/>
            <person name="Rogers Y.C."/>
            <person name="Detter J.C."/>
            <person name="Bruce D.C."/>
            <person name="Brettin T.S."/>
        </authorList>
    </citation>
    <scope>NUCLEOTIDE SEQUENCE [LARGE SCALE GENOMIC DNA]</scope>
    <source>
        <strain>Nepal516</strain>
    </source>
</reference>
<feature type="chain" id="PRO_0000307085" description="Aspartate 1-decarboxylase beta chain" evidence="1">
    <location>
        <begin position="1"/>
        <end position="24"/>
    </location>
</feature>
<feature type="chain" id="PRO_0000307086" description="Aspartate 1-decarboxylase alpha chain" evidence="1">
    <location>
        <begin position="25"/>
        <end position="126"/>
    </location>
</feature>
<feature type="active site" description="Schiff-base intermediate with substrate; via pyruvic acid" evidence="1">
    <location>
        <position position="25"/>
    </location>
</feature>
<feature type="active site" description="Proton donor" evidence="1">
    <location>
        <position position="58"/>
    </location>
</feature>
<feature type="binding site" evidence="1">
    <location>
        <position position="57"/>
    </location>
    <ligand>
        <name>substrate</name>
    </ligand>
</feature>
<feature type="binding site" evidence="1">
    <location>
        <begin position="73"/>
        <end position="75"/>
    </location>
    <ligand>
        <name>substrate</name>
    </ligand>
</feature>
<feature type="modified residue" description="Pyruvic acid (Ser)" evidence="1">
    <location>
        <position position="25"/>
    </location>
</feature>
<keyword id="KW-0068">Autocatalytic cleavage</keyword>
<keyword id="KW-0963">Cytoplasm</keyword>
<keyword id="KW-0210">Decarboxylase</keyword>
<keyword id="KW-0456">Lyase</keyword>
<keyword id="KW-0566">Pantothenate biosynthesis</keyword>
<keyword id="KW-0670">Pyruvate</keyword>
<keyword id="KW-0704">Schiff base</keyword>
<keyword id="KW-0865">Zymogen</keyword>
<comment type="function">
    <text evidence="1">Catalyzes the pyruvoyl-dependent decarboxylation of aspartate to produce beta-alanine.</text>
</comment>
<comment type="catalytic activity">
    <reaction evidence="1">
        <text>L-aspartate + H(+) = beta-alanine + CO2</text>
        <dbReference type="Rhea" id="RHEA:19497"/>
        <dbReference type="ChEBI" id="CHEBI:15378"/>
        <dbReference type="ChEBI" id="CHEBI:16526"/>
        <dbReference type="ChEBI" id="CHEBI:29991"/>
        <dbReference type="ChEBI" id="CHEBI:57966"/>
        <dbReference type="EC" id="4.1.1.11"/>
    </reaction>
</comment>
<comment type="cofactor">
    <cofactor evidence="1">
        <name>pyruvate</name>
        <dbReference type="ChEBI" id="CHEBI:15361"/>
    </cofactor>
    <text evidence="1">Binds 1 pyruvoyl group covalently per subunit.</text>
</comment>
<comment type="pathway">
    <text evidence="1">Cofactor biosynthesis; (R)-pantothenate biosynthesis; beta-alanine from L-aspartate: step 1/1.</text>
</comment>
<comment type="subunit">
    <text evidence="1">Heterooctamer of four alpha and four beta subunits.</text>
</comment>
<comment type="subcellular location">
    <subcellularLocation>
        <location evidence="1">Cytoplasm</location>
    </subcellularLocation>
</comment>
<comment type="PTM">
    <text evidence="1">Is synthesized initially as an inactive proenzyme, which is activated by self-cleavage at a specific serine bond to produce a beta-subunit with a hydroxyl group at its C-terminus and an alpha-subunit with a pyruvoyl group at its N-terminus.</text>
</comment>
<comment type="similarity">
    <text evidence="1">Belongs to the PanD family.</text>
</comment>
<dbReference type="EC" id="4.1.1.11" evidence="1"/>
<dbReference type="EMBL" id="CP000305">
    <property type="protein sequence ID" value="ABG17018.1"/>
    <property type="molecule type" value="Genomic_DNA"/>
</dbReference>
<dbReference type="EMBL" id="ACNQ01000007">
    <property type="protein sequence ID" value="EEO77878.1"/>
    <property type="molecule type" value="Genomic_DNA"/>
</dbReference>
<dbReference type="RefSeq" id="WP_002209347.1">
    <property type="nucleotide sequence ID" value="NZ_ACNQ01000007.1"/>
</dbReference>
<dbReference type="SMR" id="Q1CLW2"/>
<dbReference type="GeneID" id="57975306"/>
<dbReference type="KEGG" id="ypn:YPN_0686"/>
<dbReference type="HOGENOM" id="CLU_115305_2_1_6"/>
<dbReference type="UniPathway" id="UPA00028">
    <property type="reaction ID" value="UER00002"/>
</dbReference>
<dbReference type="Proteomes" id="UP000008936">
    <property type="component" value="Chromosome"/>
</dbReference>
<dbReference type="GO" id="GO:0005829">
    <property type="term" value="C:cytosol"/>
    <property type="evidence" value="ECO:0007669"/>
    <property type="project" value="TreeGrafter"/>
</dbReference>
<dbReference type="GO" id="GO:0004068">
    <property type="term" value="F:aspartate 1-decarboxylase activity"/>
    <property type="evidence" value="ECO:0007669"/>
    <property type="project" value="UniProtKB-UniRule"/>
</dbReference>
<dbReference type="GO" id="GO:0006523">
    <property type="term" value="P:alanine biosynthetic process"/>
    <property type="evidence" value="ECO:0007669"/>
    <property type="project" value="InterPro"/>
</dbReference>
<dbReference type="GO" id="GO:0015940">
    <property type="term" value="P:pantothenate biosynthetic process"/>
    <property type="evidence" value="ECO:0007669"/>
    <property type="project" value="UniProtKB-UniRule"/>
</dbReference>
<dbReference type="CDD" id="cd06919">
    <property type="entry name" value="Asp_decarbox"/>
    <property type="match status" value="1"/>
</dbReference>
<dbReference type="FunFam" id="2.40.40.20:FF:000004">
    <property type="entry name" value="Aspartate 1-decarboxylase"/>
    <property type="match status" value="1"/>
</dbReference>
<dbReference type="Gene3D" id="2.40.40.20">
    <property type="match status" value="1"/>
</dbReference>
<dbReference type="HAMAP" id="MF_00446">
    <property type="entry name" value="PanD"/>
    <property type="match status" value="1"/>
</dbReference>
<dbReference type="InterPro" id="IPR009010">
    <property type="entry name" value="Asp_de-COase-like_dom_sf"/>
</dbReference>
<dbReference type="InterPro" id="IPR003190">
    <property type="entry name" value="Asp_decarbox"/>
</dbReference>
<dbReference type="NCBIfam" id="TIGR00223">
    <property type="entry name" value="panD"/>
    <property type="match status" value="1"/>
</dbReference>
<dbReference type="PANTHER" id="PTHR21012">
    <property type="entry name" value="ASPARTATE 1-DECARBOXYLASE"/>
    <property type="match status" value="1"/>
</dbReference>
<dbReference type="PANTHER" id="PTHR21012:SF0">
    <property type="entry name" value="ASPARTATE 1-DECARBOXYLASE"/>
    <property type="match status" value="1"/>
</dbReference>
<dbReference type="Pfam" id="PF02261">
    <property type="entry name" value="Asp_decarbox"/>
    <property type="match status" value="1"/>
</dbReference>
<dbReference type="PIRSF" id="PIRSF006246">
    <property type="entry name" value="Asp_decarbox"/>
    <property type="match status" value="1"/>
</dbReference>
<dbReference type="SUPFAM" id="SSF50692">
    <property type="entry name" value="ADC-like"/>
    <property type="match status" value="1"/>
</dbReference>
<organism>
    <name type="scientific">Yersinia pestis bv. Antiqua (strain Nepal516)</name>
    <dbReference type="NCBI Taxonomy" id="377628"/>
    <lineage>
        <taxon>Bacteria</taxon>
        <taxon>Pseudomonadati</taxon>
        <taxon>Pseudomonadota</taxon>
        <taxon>Gammaproteobacteria</taxon>
        <taxon>Enterobacterales</taxon>
        <taxon>Yersiniaceae</taxon>
        <taxon>Yersinia</taxon>
    </lineage>
</organism>